<comment type="function">
    <text evidence="1">Involved in the gluconeogenesis. Catalyzes stereospecifically the conversion of dihydroxyacetone phosphate (DHAP) to D-glyceraldehyde-3-phosphate (G3P).</text>
</comment>
<comment type="catalytic activity">
    <reaction evidence="1">
        <text>D-glyceraldehyde 3-phosphate = dihydroxyacetone phosphate</text>
        <dbReference type="Rhea" id="RHEA:18585"/>
        <dbReference type="ChEBI" id="CHEBI:57642"/>
        <dbReference type="ChEBI" id="CHEBI:59776"/>
        <dbReference type="EC" id="5.3.1.1"/>
    </reaction>
</comment>
<comment type="pathway">
    <text evidence="1">Carbohydrate biosynthesis; gluconeogenesis.</text>
</comment>
<comment type="pathway">
    <text evidence="1">Carbohydrate degradation; glycolysis; D-glyceraldehyde 3-phosphate from glycerone phosphate: step 1/1.</text>
</comment>
<comment type="subunit">
    <text evidence="1">Homodimer.</text>
</comment>
<comment type="subcellular location">
    <subcellularLocation>
        <location evidence="1">Cytoplasm</location>
    </subcellularLocation>
</comment>
<comment type="similarity">
    <text evidence="1">Belongs to the triosephosphate isomerase family.</text>
</comment>
<evidence type="ECO:0000255" key="1">
    <source>
        <dbReference type="HAMAP-Rule" id="MF_00147"/>
    </source>
</evidence>
<dbReference type="EC" id="5.3.1.1" evidence="1"/>
<dbReference type="EMBL" id="CP000552">
    <property type="protein sequence ID" value="ABM72111.1"/>
    <property type="molecule type" value="Genomic_DNA"/>
</dbReference>
<dbReference type="RefSeq" id="WP_011820215.1">
    <property type="nucleotide sequence ID" value="NC_008817.1"/>
</dbReference>
<dbReference type="SMR" id="A2BWF0"/>
<dbReference type="STRING" id="167542.P9515_09041"/>
<dbReference type="GeneID" id="60201539"/>
<dbReference type="KEGG" id="pmc:P9515_09041"/>
<dbReference type="eggNOG" id="COG0149">
    <property type="taxonomic scope" value="Bacteria"/>
</dbReference>
<dbReference type="HOGENOM" id="CLU_024251_2_3_3"/>
<dbReference type="OrthoDB" id="9809429at2"/>
<dbReference type="UniPathway" id="UPA00109">
    <property type="reaction ID" value="UER00189"/>
</dbReference>
<dbReference type="UniPathway" id="UPA00138"/>
<dbReference type="Proteomes" id="UP000001589">
    <property type="component" value="Chromosome"/>
</dbReference>
<dbReference type="GO" id="GO:0005829">
    <property type="term" value="C:cytosol"/>
    <property type="evidence" value="ECO:0007669"/>
    <property type="project" value="TreeGrafter"/>
</dbReference>
<dbReference type="GO" id="GO:0004807">
    <property type="term" value="F:triose-phosphate isomerase activity"/>
    <property type="evidence" value="ECO:0007669"/>
    <property type="project" value="UniProtKB-UniRule"/>
</dbReference>
<dbReference type="GO" id="GO:0006094">
    <property type="term" value="P:gluconeogenesis"/>
    <property type="evidence" value="ECO:0007669"/>
    <property type="project" value="UniProtKB-UniRule"/>
</dbReference>
<dbReference type="GO" id="GO:0046166">
    <property type="term" value="P:glyceraldehyde-3-phosphate biosynthetic process"/>
    <property type="evidence" value="ECO:0007669"/>
    <property type="project" value="TreeGrafter"/>
</dbReference>
<dbReference type="GO" id="GO:0019563">
    <property type="term" value="P:glycerol catabolic process"/>
    <property type="evidence" value="ECO:0007669"/>
    <property type="project" value="TreeGrafter"/>
</dbReference>
<dbReference type="GO" id="GO:0006096">
    <property type="term" value="P:glycolytic process"/>
    <property type="evidence" value="ECO:0007669"/>
    <property type="project" value="UniProtKB-UniRule"/>
</dbReference>
<dbReference type="CDD" id="cd00311">
    <property type="entry name" value="TIM"/>
    <property type="match status" value="1"/>
</dbReference>
<dbReference type="FunFam" id="3.20.20.70:FF:000016">
    <property type="entry name" value="Triosephosphate isomerase"/>
    <property type="match status" value="1"/>
</dbReference>
<dbReference type="Gene3D" id="3.20.20.70">
    <property type="entry name" value="Aldolase class I"/>
    <property type="match status" value="1"/>
</dbReference>
<dbReference type="HAMAP" id="MF_00147_B">
    <property type="entry name" value="TIM_B"/>
    <property type="match status" value="1"/>
</dbReference>
<dbReference type="InterPro" id="IPR013785">
    <property type="entry name" value="Aldolase_TIM"/>
</dbReference>
<dbReference type="InterPro" id="IPR035990">
    <property type="entry name" value="TIM_sf"/>
</dbReference>
<dbReference type="InterPro" id="IPR022896">
    <property type="entry name" value="TrioseP_Isoase_bac/euk"/>
</dbReference>
<dbReference type="InterPro" id="IPR000652">
    <property type="entry name" value="Triosephosphate_isomerase"/>
</dbReference>
<dbReference type="InterPro" id="IPR020861">
    <property type="entry name" value="Triosephosphate_isomerase_AS"/>
</dbReference>
<dbReference type="NCBIfam" id="TIGR00419">
    <property type="entry name" value="tim"/>
    <property type="match status" value="1"/>
</dbReference>
<dbReference type="PANTHER" id="PTHR21139">
    <property type="entry name" value="TRIOSEPHOSPHATE ISOMERASE"/>
    <property type="match status" value="1"/>
</dbReference>
<dbReference type="PANTHER" id="PTHR21139:SF42">
    <property type="entry name" value="TRIOSEPHOSPHATE ISOMERASE"/>
    <property type="match status" value="1"/>
</dbReference>
<dbReference type="Pfam" id="PF00121">
    <property type="entry name" value="TIM"/>
    <property type="match status" value="1"/>
</dbReference>
<dbReference type="SUPFAM" id="SSF51351">
    <property type="entry name" value="Triosephosphate isomerase (TIM)"/>
    <property type="match status" value="1"/>
</dbReference>
<dbReference type="PROSITE" id="PS00171">
    <property type="entry name" value="TIM_1"/>
    <property type="match status" value="1"/>
</dbReference>
<dbReference type="PROSITE" id="PS51440">
    <property type="entry name" value="TIM_2"/>
    <property type="match status" value="1"/>
</dbReference>
<reference key="1">
    <citation type="journal article" date="2007" name="PLoS Genet.">
        <title>Patterns and implications of gene gain and loss in the evolution of Prochlorococcus.</title>
        <authorList>
            <person name="Kettler G.C."/>
            <person name="Martiny A.C."/>
            <person name="Huang K."/>
            <person name="Zucker J."/>
            <person name="Coleman M.L."/>
            <person name="Rodrigue S."/>
            <person name="Chen F."/>
            <person name="Lapidus A."/>
            <person name="Ferriera S."/>
            <person name="Johnson J."/>
            <person name="Steglich C."/>
            <person name="Church G.M."/>
            <person name="Richardson P."/>
            <person name="Chisholm S.W."/>
        </authorList>
    </citation>
    <scope>NUCLEOTIDE SEQUENCE [LARGE SCALE GENOMIC DNA]</scope>
    <source>
        <strain>MIT 9515</strain>
    </source>
</reference>
<accession>A2BWF0</accession>
<keyword id="KW-0963">Cytoplasm</keyword>
<keyword id="KW-0312">Gluconeogenesis</keyword>
<keyword id="KW-0324">Glycolysis</keyword>
<keyword id="KW-0413">Isomerase</keyword>
<feature type="chain" id="PRO_0000307527" description="Triosephosphate isomerase">
    <location>
        <begin position="1"/>
        <end position="241"/>
    </location>
</feature>
<feature type="active site" description="Electrophile" evidence="1">
    <location>
        <position position="96"/>
    </location>
</feature>
<feature type="active site" description="Proton acceptor" evidence="1">
    <location>
        <position position="165"/>
    </location>
</feature>
<feature type="binding site" evidence="1">
    <location>
        <begin position="9"/>
        <end position="11"/>
    </location>
    <ligand>
        <name>substrate</name>
    </ligand>
</feature>
<feature type="binding site" evidence="1">
    <location>
        <position position="171"/>
    </location>
    <ligand>
        <name>substrate</name>
    </ligand>
</feature>
<feature type="binding site" evidence="1">
    <location>
        <position position="204"/>
    </location>
    <ligand>
        <name>substrate</name>
    </ligand>
</feature>
<feature type="binding site" evidence="1">
    <location>
        <begin position="225"/>
        <end position="226"/>
    </location>
    <ligand>
        <name>substrate</name>
    </ligand>
</feature>
<gene>
    <name evidence="1" type="primary">tpiA</name>
    <name type="ordered locus">P9515_09041</name>
</gene>
<proteinExistence type="inferred from homology"/>
<sequence>MRKSVIAGNWKMHMTCAETKNYLEEFIPLIKDLPNDRKIVIAPPFTAISTFSSYSNFDYLDIASQNIHWEDQGAFTAEISPKMLIEHNVKYAIVGHSEPRKYFSESDEQINKRAVFAQSSGLTPIVCVGETLEQRERGEANRVITRQVEQGLENTDPSNLIIAYEPIWAIGTGKTCEASDANKICALIRELIGFDDVIIQYGGSVKPNNIDEIMSMSDINGVLVGGSSLDPISFSRIANYE</sequence>
<organism>
    <name type="scientific">Prochlorococcus marinus (strain MIT 9515)</name>
    <dbReference type="NCBI Taxonomy" id="167542"/>
    <lineage>
        <taxon>Bacteria</taxon>
        <taxon>Bacillati</taxon>
        <taxon>Cyanobacteriota</taxon>
        <taxon>Cyanophyceae</taxon>
        <taxon>Synechococcales</taxon>
        <taxon>Prochlorococcaceae</taxon>
        <taxon>Prochlorococcus</taxon>
    </lineage>
</organism>
<protein>
    <recommendedName>
        <fullName evidence="1">Triosephosphate isomerase</fullName>
        <shortName evidence="1">TIM</shortName>
        <shortName evidence="1">TPI</shortName>
        <ecNumber evidence="1">5.3.1.1</ecNumber>
    </recommendedName>
    <alternativeName>
        <fullName evidence="1">Triose-phosphate isomerase</fullName>
    </alternativeName>
</protein>
<name>TPIS_PROM5</name>